<protein>
    <recommendedName>
        <fullName evidence="4">Adenosine deaminase</fullName>
        <ecNumber evidence="3">3.5.4.4</ecNumber>
    </recommendedName>
</protein>
<organism evidence="6">
    <name type="scientific">Lutzomyia longipalpis</name>
    <name type="common">Sand fly</name>
    <dbReference type="NCBI Taxonomy" id="7200"/>
    <lineage>
        <taxon>Eukaryota</taxon>
        <taxon>Metazoa</taxon>
        <taxon>Ecdysozoa</taxon>
        <taxon>Arthropoda</taxon>
        <taxon>Hexapoda</taxon>
        <taxon>Insecta</taxon>
        <taxon>Pterygota</taxon>
        <taxon>Neoptera</taxon>
        <taxon>Endopterygota</taxon>
        <taxon>Diptera</taxon>
        <taxon>Nematocera</taxon>
        <taxon>Psychodoidea</taxon>
        <taxon>Psychodidae</taxon>
        <taxon>Lutzomyia</taxon>
        <taxon>Lutzomyia</taxon>
    </lineage>
</organism>
<reference evidence="6" key="1">
    <citation type="journal article" date="2000" name="Exp. Parasitol.">
        <title>The salivary adenosine deaminase from the sand fly Lutzomyia longipalpis.</title>
        <authorList>
            <person name="Charlab R."/>
            <person name="Rowton E.D."/>
            <person name="Ribeiro J.M."/>
        </authorList>
    </citation>
    <scope>NUCLEOTIDE SEQUENCE [MRNA]</scope>
    <scope>FUNCTION</scope>
    <scope>CATALYTIC ACTIVITY</scope>
    <scope>BIOPHYSICOCHEMICAL PROPERTIES</scope>
    <scope>SUBCELLULAR LOCATION</scope>
    <scope>TISSUE SPECIFICITY</scope>
    <source>
        <strain evidence="6">Jacobina</strain>
        <tissue evidence="6">Salivary gland</tissue>
    </source>
</reference>
<accession>Q9NC65</accession>
<sequence length="508" mass="58393">MFSQLVVWLLATSTVCLAWDNSWIMDMKYERYSQRRSYYLAEEEDRSVGSDIELTAKEQVVNERLMELKMTELKNGLQDPAGFIPWNHIFDVLYRINSSELFHIIQKMPKGGILHAHDTALCSTDYVISLTYEPNLWQCADPTTGAFQFLFSREAPTNTDTCTWTLVADERAKQGEENYNSALRSQLSMYNTNPIMHNRDVDSIWRQFMGIFGVNGGLLTYAPVWKAYYLQFLKEMFADGVQYLELRTTLPPLYDLDGKTYNEVEIMQIYYDATKEFKKQNPTFIGAKIIYAPVRVVDDAGIPALMAKVRELHEKFPDFMAGFDLVGQEDKGRPLIAFSREILKLPNSIDFYFHAGETNWDGMTDDNLIDAVLLGTKRIGHGYAVLKHPRVLKEVKRNKIAIEVCPASNQVLRLVADYRNHPGSVLLANKEYPVVISSDDPSFWEAKPLSHDFYMAFLGLASSRQDLRLLKQLAINSIKYSAMSPREKLQAMQMWEAEWKKFIDGFNA</sequence>
<evidence type="ECO:0000250" key="1">
    <source>
        <dbReference type="UniProtKB" id="Q9NZK5"/>
    </source>
</evidence>
<evidence type="ECO:0000255" key="2"/>
<evidence type="ECO:0000269" key="3">
    <source>
    </source>
</evidence>
<evidence type="ECO:0000303" key="4">
    <source>
    </source>
</evidence>
<evidence type="ECO:0000305" key="5"/>
<evidence type="ECO:0000312" key="6">
    <source>
        <dbReference type="EMBL" id="AAF78901.1"/>
    </source>
</evidence>
<gene>
    <name evidence="6" type="primary">ADA</name>
</gene>
<dbReference type="EC" id="3.5.4.4" evidence="3"/>
<dbReference type="EMBL" id="AF234182">
    <property type="protein sequence ID" value="AAF78901.1"/>
    <property type="molecule type" value="mRNA"/>
</dbReference>
<dbReference type="SMR" id="Q9NC65"/>
<dbReference type="VEuPathDB" id="VectorBase:LLOJ004125"/>
<dbReference type="VEuPathDB" id="VectorBase:LLONM1_003565"/>
<dbReference type="Proteomes" id="UP000092461">
    <property type="component" value="Unplaced"/>
</dbReference>
<dbReference type="GO" id="GO:0005615">
    <property type="term" value="C:extracellular space"/>
    <property type="evidence" value="ECO:0007669"/>
    <property type="project" value="InterPro"/>
</dbReference>
<dbReference type="GO" id="GO:0004000">
    <property type="term" value="F:adenosine deaminase activity"/>
    <property type="evidence" value="ECO:0007669"/>
    <property type="project" value="InterPro"/>
</dbReference>
<dbReference type="GO" id="GO:0046872">
    <property type="term" value="F:metal ion binding"/>
    <property type="evidence" value="ECO:0007669"/>
    <property type="project" value="UniProtKB-KW"/>
</dbReference>
<dbReference type="GO" id="GO:0006154">
    <property type="term" value="P:adenosine catabolic process"/>
    <property type="evidence" value="ECO:0007669"/>
    <property type="project" value="InterPro"/>
</dbReference>
<dbReference type="GO" id="GO:0046103">
    <property type="term" value="P:inosine biosynthetic process"/>
    <property type="evidence" value="ECO:0007669"/>
    <property type="project" value="TreeGrafter"/>
</dbReference>
<dbReference type="CDD" id="cd01321">
    <property type="entry name" value="ADGF"/>
    <property type="match status" value="1"/>
</dbReference>
<dbReference type="FunFam" id="3.20.20.140:FF:000017">
    <property type="entry name" value="Adenosine deaminase 2"/>
    <property type="match status" value="1"/>
</dbReference>
<dbReference type="Gene3D" id="3.20.20.140">
    <property type="entry name" value="Metal-dependent hydrolases"/>
    <property type="match status" value="1"/>
</dbReference>
<dbReference type="InterPro" id="IPR001365">
    <property type="entry name" value="A_deaminase_dom"/>
</dbReference>
<dbReference type="InterPro" id="IPR013659">
    <property type="entry name" value="A_deaminase_N"/>
</dbReference>
<dbReference type="InterPro" id="IPR006331">
    <property type="entry name" value="ADGF"/>
</dbReference>
<dbReference type="InterPro" id="IPR006330">
    <property type="entry name" value="Ado/ade_deaminase"/>
</dbReference>
<dbReference type="InterPro" id="IPR032466">
    <property type="entry name" value="Metal_Hydrolase"/>
</dbReference>
<dbReference type="NCBIfam" id="TIGR01431">
    <property type="entry name" value="adm_rel"/>
    <property type="match status" value="1"/>
</dbReference>
<dbReference type="PANTHER" id="PTHR11409">
    <property type="entry name" value="ADENOSINE DEAMINASE"/>
    <property type="match status" value="1"/>
</dbReference>
<dbReference type="PANTHER" id="PTHR11409:SF39">
    <property type="entry name" value="ADENOSINE DEAMINASE 2"/>
    <property type="match status" value="1"/>
</dbReference>
<dbReference type="Pfam" id="PF00962">
    <property type="entry name" value="A_deaminase"/>
    <property type="match status" value="1"/>
</dbReference>
<dbReference type="Pfam" id="PF08451">
    <property type="entry name" value="A_deaminase_N"/>
    <property type="match status" value="1"/>
</dbReference>
<dbReference type="SUPFAM" id="SSF51556">
    <property type="entry name" value="Metallo-dependent hydrolases"/>
    <property type="match status" value="1"/>
</dbReference>
<comment type="function">
    <text evidence="3">Catalyzes the deamination of adenosine to inosine.</text>
</comment>
<comment type="catalytic activity">
    <reaction evidence="3">
        <text>adenosine + H2O + H(+) = inosine + NH4(+)</text>
        <dbReference type="Rhea" id="RHEA:24408"/>
        <dbReference type="ChEBI" id="CHEBI:15377"/>
        <dbReference type="ChEBI" id="CHEBI:15378"/>
        <dbReference type="ChEBI" id="CHEBI:16335"/>
        <dbReference type="ChEBI" id="CHEBI:17596"/>
        <dbReference type="ChEBI" id="CHEBI:28938"/>
        <dbReference type="EC" id="3.5.4.4"/>
    </reaction>
</comment>
<comment type="cofactor">
    <cofactor evidence="1">
        <name>Zn(2+)</name>
        <dbReference type="ChEBI" id="CHEBI:29105"/>
    </cofactor>
</comment>
<comment type="biophysicochemical properties">
    <kinetics>
        <KM evidence="3">8.4 uM for adenosine</KM>
    </kinetics>
    <phDependence>
        <text evidence="3">Optimum pH is 5-8.</text>
    </phDependence>
</comment>
<comment type="subcellular location">
    <subcellularLocation>
        <location evidence="3">Secreted</location>
    </subcellularLocation>
</comment>
<comment type="tissue specificity">
    <text evidence="3">Salivary gland (at protein level).</text>
</comment>
<comment type="similarity">
    <text evidence="5">Belongs to the metallo-dependent hydrolases superfamily. Adenosine and AMP deaminases family. ADGF subfamily.</text>
</comment>
<feature type="signal peptide" evidence="2">
    <location>
        <begin position="1"/>
        <end position="18"/>
    </location>
</feature>
<feature type="chain" id="PRO_5004335413" description="Adenosine deaminase" evidence="2">
    <location>
        <begin position="19"/>
        <end position="508"/>
    </location>
</feature>
<keyword id="KW-0378">Hydrolase</keyword>
<keyword id="KW-0479">Metal-binding</keyword>
<keyword id="KW-0964">Secreted</keyword>
<keyword id="KW-0732">Signal</keyword>
<name>ADA_LUTLO</name>
<proteinExistence type="evidence at protein level"/>